<protein>
    <recommendedName>
        <fullName evidence="1">dITP/XTP pyrophosphatase</fullName>
        <ecNumber evidence="1">3.6.1.66</ecNumber>
    </recommendedName>
    <alternativeName>
        <fullName evidence="1">Non-canonical purine NTP pyrophosphatase</fullName>
    </alternativeName>
    <alternativeName>
        <fullName evidence="1">Non-standard purine NTP pyrophosphatase</fullName>
    </alternativeName>
    <alternativeName>
        <fullName evidence="1">Nucleoside-triphosphate diphosphatase</fullName>
    </alternativeName>
    <alternativeName>
        <fullName evidence="1">Nucleoside-triphosphate pyrophosphatase</fullName>
        <shortName evidence="1">NTPase</shortName>
    </alternativeName>
</protein>
<sequence>MRIRLATNNPYKLAEVSHILAPFCIEVERLDAEKVEIQHDDVVVIARKAAEFLCSRYGDFVVVDDTGLYIEALGGFPGPYAEYVYRTIGLKGVLKLLEGAADRRATFKCAAAICIGGRVEVFVGEVRGYIAHEPRGRGGFGYDPIFIPEGMTATYAELGEEVKNKISHRAKAFSQLGAWLTNRNLFK</sequence>
<organism>
    <name type="scientific">Pyrobaculum aerophilum (strain ATCC 51768 / DSM 7523 / JCM 9630 / CIP 104966 / NBRC 100827 / IM2)</name>
    <dbReference type="NCBI Taxonomy" id="178306"/>
    <lineage>
        <taxon>Archaea</taxon>
        <taxon>Thermoproteota</taxon>
        <taxon>Thermoprotei</taxon>
        <taxon>Thermoproteales</taxon>
        <taxon>Thermoproteaceae</taxon>
        <taxon>Pyrobaculum</taxon>
    </lineage>
</organism>
<comment type="function">
    <text evidence="1">Pyrophosphatase that catalyzes the hydrolysis of nucleoside triphosphates to their monophosphate derivatives, with a high preference for the non-canonical purine nucleotides XTP (xanthosine triphosphate), dITP (deoxyinosine triphosphate) and ITP. Seems to function as a house-cleaning enzyme that removes non-canonical purine nucleotides from the nucleotide pool, thus preventing their incorporation into DNA/RNA and avoiding chromosomal lesions.</text>
</comment>
<comment type="catalytic activity">
    <reaction evidence="1">
        <text>XTP + H2O = XMP + diphosphate + H(+)</text>
        <dbReference type="Rhea" id="RHEA:28610"/>
        <dbReference type="ChEBI" id="CHEBI:15377"/>
        <dbReference type="ChEBI" id="CHEBI:15378"/>
        <dbReference type="ChEBI" id="CHEBI:33019"/>
        <dbReference type="ChEBI" id="CHEBI:57464"/>
        <dbReference type="ChEBI" id="CHEBI:61314"/>
        <dbReference type="EC" id="3.6.1.66"/>
    </reaction>
</comment>
<comment type="catalytic activity">
    <reaction evidence="1">
        <text>dITP + H2O = dIMP + diphosphate + H(+)</text>
        <dbReference type="Rhea" id="RHEA:28342"/>
        <dbReference type="ChEBI" id="CHEBI:15377"/>
        <dbReference type="ChEBI" id="CHEBI:15378"/>
        <dbReference type="ChEBI" id="CHEBI:33019"/>
        <dbReference type="ChEBI" id="CHEBI:61194"/>
        <dbReference type="ChEBI" id="CHEBI:61382"/>
        <dbReference type="EC" id="3.6.1.66"/>
    </reaction>
</comment>
<comment type="catalytic activity">
    <reaction evidence="1">
        <text>ITP + H2O = IMP + diphosphate + H(+)</text>
        <dbReference type="Rhea" id="RHEA:29399"/>
        <dbReference type="ChEBI" id="CHEBI:15377"/>
        <dbReference type="ChEBI" id="CHEBI:15378"/>
        <dbReference type="ChEBI" id="CHEBI:33019"/>
        <dbReference type="ChEBI" id="CHEBI:58053"/>
        <dbReference type="ChEBI" id="CHEBI:61402"/>
        <dbReference type="EC" id="3.6.1.66"/>
    </reaction>
</comment>
<comment type="cofactor">
    <cofactor evidence="1">
        <name>Mg(2+)</name>
        <dbReference type="ChEBI" id="CHEBI:18420"/>
    </cofactor>
    <text evidence="1">Binds 1 Mg(2+) ion per subunit.</text>
</comment>
<comment type="subunit">
    <text evidence="1">Homodimer.</text>
</comment>
<comment type="similarity">
    <text evidence="1">Belongs to the HAM1 NTPase family.</text>
</comment>
<accession>Q8ZVB5</accession>
<proteinExistence type="inferred from homology"/>
<name>IXTPA_PYRAE</name>
<reference key="1">
    <citation type="journal article" date="2002" name="Proc. Natl. Acad. Sci. U.S.A.">
        <title>Genome sequence of the hyperthermophilic crenarchaeon Pyrobaculum aerophilum.</title>
        <authorList>
            <person name="Fitz-Gibbon S.T."/>
            <person name="Ladner H."/>
            <person name="Kim U.-J."/>
            <person name="Stetter K.O."/>
            <person name="Simon M.I."/>
            <person name="Miller J.H."/>
        </authorList>
    </citation>
    <scope>NUCLEOTIDE SEQUENCE [LARGE SCALE GENOMIC DNA]</scope>
    <source>
        <strain>ATCC 51768 / DSM 7523 / JCM 9630 / CIP 104966 / NBRC 100827 / IM2</strain>
    </source>
</reference>
<dbReference type="EC" id="3.6.1.66" evidence="1"/>
<dbReference type="EMBL" id="AE009441">
    <property type="protein sequence ID" value="AAL64141.1"/>
    <property type="molecule type" value="Genomic_DNA"/>
</dbReference>
<dbReference type="RefSeq" id="WP_011008609.1">
    <property type="nucleotide sequence ID" value="NC_003364.1"/>
</dbReference>
<dbReference type="SMR" id="Q8ZVB5"/>
<dbReference type="FunCoup" id="Q8ZVB5">
    <property type="interactions" value="197"/>
</dbReference>
<dbReference type="STRING" id="178306.PAE2365"/>
<dbReference type="EnsemblBacteria" id="AAL64141">
    <property type="protein sequence ID" value="AAL64141"/>
    <property type="gene ID" value="PAE2365"/>
</dbReference>
<dbReference type="GeneID" id="1464477"/>
<dbReference type="KEGG" id="pai:PAE2365"/>
<dbReference type="PATRIC" id="fig|178306.9.peg.1763"/>
<dbReference type="eggNOG" id="arCOG04184">
    <property type="taxonomic scope" value="Archaea"/>
</dbReference>
<dbReference type="HOGENOM" id="CLU_082080_0_2_2"/>
<dbReference type="InParanoid" id="Q8ZVB5"/>
<dbReference type="Proteomes" id="UP000002439">
    <property type="component" value="Chromosome"/>
</dbReference>
<dbReference type="GO" id="GO:0005737">
    <property type="term" value="C:cytoplasm"/>
    <property type="evidence" value="ECO:0000318"/>
    <property type="project" value="GO_Central"/>
</dbReference>
<dbReference type="GO" id="GO:0035870">
    <property type="term" value="F:dITP diphosphatase activity"/>
    <property type="evidence" value="ECO:0007669"/>
    <property type="project" value="RHEA"/>
</dbReference>
<dbReference type="GO" id="GO:0036220">
    <property type="term" value="F:ITP diphosphatase activity"/>
    <property type="evidence" value="ECO:0007669"/>
    <property type="project" value="UniProtKB-EC"/>
</dbReference>
<dbReference type="GO" id="GO:0046872">
    <property type="term" value="F:metal ion binding"/>
    <property type="evidence" value="ECO:0007669"/>
    <property type="project" value="UniProtKB-KW"/>
</dbReference>
<dbReference type="GO" id="GO:0047429">
    <property type="term" value="F:nucleoside triphosphate diphosphatase activity"/>
    <property type="evidence" value="ECO:0000318"/>
    <property type="project" value="GO_Central"/>
</dbReference>
<dbReference type="GO" id="GO:0000166">
    <property type="term" value="F:nucleotide binding"/>
    <property type="evidence" value="ECO:0007669"/>
    <property type="project" value="UniProtKB-KW"/>
</dbReference>
<dbReference type="GO" id="GO:0017111">
    <property type="term" value="F:ribonucleoside triphosphate phosphatase activity"/>
    <property type="evidence" value="ECO:0007669"/>
    <property type="project" value="InterPro"/>
</dbReference>
<dbReference type="GO" id="GO:0036222">
    <property type="term" value="F:XTP diphosphatase activity"/>
    <property type="evidence" value="ECO:0007669"/>
    <property type="project" value="RHEA"/>
</dbReference>
<dbReference type="GO" id="GO:0009143">
    <property type="term" value="P:nucleoside triphosphate catabolic process"/>
    <property type="evidence" value="ECO:0000318"/>
    <property type="project" value="GO_Central"/>
</dbReference>
<dbReference type="GO" id="GO:0009117">
    <property type="term" value="P:nucleotide metabolic process"/>
    <property type="evidence" value="ECO:0007669"/>
    <property type="project" value="UniProtKB-KW"/>
</dbReference>
<dbReference type="GO" id="GO:0009146">
    <property type="term" value="P:purine nucleoside triphosphate catabolic process"/>
    <property type="evidence" value="ECO:0007669"/>
    <property type="project" value="UniProtKB-UniRule"/>
</dbReference>
<dbReference type="CDD" id="cd00515">
    <property type="entry name" value="HAM1"/>
    <property type="match status" value="1"/>
</dbReference>
<dbReference type="FunFam" id="3.90.950.10:FF:000001">
    <property type="entry name" value="dITP/XTP pyrophosphatase"/>
    <property type="match status" value="1"/>
</dbReference>
<dbReference type="Gene3D" id="3.90.950.10">
    <property type="match status" value="1"/>
</dbReference>
<dbReference type="HAMAP" id="MF_01405">
    <property type="entry name" value="Non_canon_purine_NTPase"/>
    <property type="match status" value="1"/>
</dbReference>
<dbReference type="InterPro" id="IPR020922">
    <property type="entry name" value="dITP/XTP_pyrophosphatase"/>
</dbReference>
<dbReference type="InterPro" id="IPR029001">
    <property type="entry name" value="ITPase-like_fam"/>
</dbReference>
<dbReference type="InterPro" id="IPR002637">
    <property type="entry name" value="RdgB/HAM1"/>
</dbReference>
<dbReference type="NCBIfam" id="NF011396">
    <property type="entry name" value="PRK14821.1"/>
    <property type="match status" value="1"/>
</dbReference>
<dbReference type="NCBIfam" id="TIGR00042">
    <property type="entry name" value="RdgB/HAM1 family non-canonical purine NTP pyrophosphatase"/>
    <property type="match status" value="1"/>
</dbReference>
<dbReference type="PANTHER" id="PTHR11067:SF9">
    <property type="entry name" value="INOSINE TRIPHOSPHATE PYROPHOSPHATASE"/>
    <property type="match status" value="1"/>
</dbReference>
<dbReference type="PANTHER" id="PTHR11067">
    <property type="entry name" value="INOSINE TRIPHOSPHATE PYROPHOSPHATASE/HAM1 PROTEIN"/>
    <property type="match status" value="1"/>
</dbReference>
<dbReference type="Pfam" id="PF01725">
    <property type="entry name" value="Ham1p_like"/>
    <property type="match status" value="1"/>
</dbReference>
<dbReference type="SUPFAM" id="SSF52972">
    <property type="entry name" value="ITPase-like"/>
    <property type="match status" value="1"/>
</dbReference>
<feature type="chain" id="PRO_0000410427" description="dITP/XTP pyrophosphatase">
    <location>
        <begin position="1"/>
        <end position="187"/>
    </location>
</feature>
<feature type="active site" description="Proton acceptor" evidence="1">
    <location>
        <position position="65"/>
    </location>
</feature>
<feature type="binding site" evidence="1">
    <location>
        <begin position="7"/>
        <end position="12"/>
    </location>
    <ligand>
        <name>substrate</name>
    </ligand>
</feature>
<feature type="binding site" evidence="1">
    <location>
        <position position="36"/>
    </location>
    <ligand>
        <name>Mg(2+)</name>
        <dbReference type="ChEBI" id="CHEBI:18420"/>
    </ligand>
</feature>
<feature type="binding site" evidence="1">
    <location>
        <position position="65"/>
    </location>
    <ligand>
        <name>Mg(2+)</name>
        <dbReference type="ChEBI" id="CHEBI:18420"/>
    </ligand>
</feature>
<feature type="binding site" evidence="1">
    <location>
        <position position="66"/>
    </location>
    <ligand>
        <name>substrate</name>
    </ligand>
</feature>
<feature type="binding site" evidence="1">
    <location>
        <begin position="140"/>
        <end position="143"/>
    </location>
    <ligand>
        <name>substrate</name>
    </ligand>
</feature>
<feature type="binding site" evidence="1">
    <location>
        <position position="163"/>
    </location>
    <ligand>
        <name>substrate</name>
    </ligand>
</feature>
<feature type="binding site" evidence="1">
    <location>
        <begin position="168"/>
        <end position="169"/>
    </location>
    <ligand>
        <name>substrate</name>
    </ligand>
</feature>
<keyword id="KW-0378">Hydrolase</keyword>
<keyword id="KW-0460">Magnesium</keyword>
<keyword id="KW-0479">Metal-binding</keyword>
<keyword id="KW-0546">Nucleotide metabolism</keyword>
<keyword id="KW-0547">Nucleotide-binding</keyword>
<keyword id="KW-1185">Reference proteome</keyword>
<gene>
    <name type="ordered locus">PAE2365</name>
</gene>
<evidence type="ECO:0000255" key="1">
    <source>
        <dbReference type="HAMAP-Rule" id="MF_01405"/>
    </source>
</evidence>